<protein>
    <recommendedName>
        <fullName evidence="1">Neuraminidase</fullName>
        <ecNumber evidence="1">3.2.1.18</ecNumber>
    </recommendedName>
</protein>
<name>NRAM_I80AA</name>
<gene>
    <name evidence="1" type="primary">NA</name>
</gene>
<reference key="1">
    <citation type="submission" date="2007-03" db="EMBL/GenBank/DDBJ databases">
        <title>The NIAID influenza genome sequencing project.</title>
        <authorList>
            <person name="Ghedin E."/>
            <person name="Spiro D."/>
            <person name="Miller N."/>
            <person name="Zaborsky J."/>
            <person name="Feldblyum T."/>
            <person name="Subbu V."/>
            <person name="Shumway M."/>
            <person name="Sparenborg J."/>
            <person name="Groveman L."/>
            <person name="Halpin R."/>
            <person name="Sitz J."/>
            <person name="Koo H."/>
            <person name="Salzberg S.L."/>
            <person name="Webster R.G."/>
            <person name="Hoffmann E."/>
            <person name="Krauss S."/>
            <person name="Naeve C."/>
            <person name="Bao Y."/>
            <person name="Bolotov P."/>
            <person name="Dernovoy D."/>
            <person name="Kiryutin B."/>
            <person name="Lipman D.J."/>
            <person name="Tatusova T."/>
        </authorList>
    </citation>
    <scope>NUCLEOTIDE SEQUENCE [GENOMIC RNA]</scope>
</reference>
<reference key="2">
    <citation type="submission" date="2007-03" db="EMBL/GenBank/DDBJ databases">
        <authorList>
            <consortium name="The NIAID Influenza Genome Sequencing Consortium"/>
        </authorList>
    </citation>
    <scope>NUCLEOTIDE SEQUENCE [GENOMIC RNA]</scope>
</reference>
<organismHost>
    <name type="scientific">Aves</name>
    <dbReference type="NCBI Taxonomy" id="8782"/>
</organismHost>
<organismHost>
    <name type="scientific">Homo sapiens</name>
    <name type="common">Human</name>
    <dbReference type="NCBI Taxonomy" id="9606"/>
</organismHost>
<organismHost>
    <name type="scientific">Sus scrofa</name>
    <name type="common">Pig</name>
    <dbReference type="NCBI Taxonomy" id="9823"/>
</organismHost>
<comment type="function">
    <text evidence="1">Catalyzes the removal of terminal sialic acid residues from viral and cellular glycoconjugates. Cleaves off the terminal sialic acids on the glycosylated HA during virus budding to facilitate virus release. Additionally helps virus spread through the circulation by further removing sialic acids from the cell surface. These cleavages prevent self-aggregation and ensure the efficient spread of the progeny virus from cell to cell. Otherwise, infection would be limited to one round of replication. Described as a receptor-destroying enzyme because it cleaves a terminal sialic acid from the cellular receptors. May facilitate viral invasion of the upper airways by cleaving the sialic acid moieties on the mucin of the airway epithelial cells. Likely to plays a role in the budding process through its association with lipid rafts during intracellular transport. May additionally display a raft-association independent effect on budding. Plays a role in the determination of host range restriction on replication and virulence. Sialidase activity in late endosome/lysosome traffic seems to enhance virus replication.</text>
</comment>
<comment type="catalytic activity">
    <reaction evidence="1">
        <text>Hydrolysis of alpha-(2-&gt;3)-, alpha-(2-&gt;6)-, alpha-(2-&gt;8)- glycosidic linkages of terminal sialic acid residues in oligosaccharides, glycoproteins, glycolipids, colominic acid and synthetic substrates.</text>
        <dbReference type="EC" id="3.2.1.18"/>
    </reaction>
</comment>
<comment type="cofactor">
    <cofactor evidence="1">
        <name>Ca(2+)</name>
        <dbReference type="ChEBI" id="CHEBI:29108"/>
    </cofactor>
</comment>
<comment type="activity regulation">
    <text evidence="1">Inhibited by the neuraminidase inhibitors zanamivir (Relenza) and oseltamivir (Tamiflu). These drugs interfere with the release of progeny virus from infected cells and are effective against all influenza strains. Resistance to neuraminidase inhibitors is quite rare.</text>
</comment>
<comment type="subunit">
    <text evidence="1">Homotetramer.</text>
</comment>
<comment type="subcellular location">
    <subcellularLocation>
        <location evidence="1">Virion membrane</location>
    </subcellularLocation>
    <subcellularLocation>
        <location evidence="1">Host apical cell membrane</location>
        <topology evidence="1">Single-pass type II membrane protein</topology>
    </subcellularLocation>
    <text evidence="1">Preferentially accumulates at the apical plasma membrane in infected polarized epithelial cells, which is the virus assembly site. Uses lipid rafts for cell surface transport and apical sorting. In the virion, forms a mushroom-shaped spike on the surface of the membrane.</text>
</comment>
<comment type="domain">
    <text evidence="1">Intact N-terminus is essential for virion morphogenesis. Possesses two apical sorting signals, one in the ectodomain, which is likely to be a glycan, and the other in the transmembrane domain. The transmembrane domain also plays a role in lipid raft association.</text>
</comment>
<comment type="PTM">
    <text evidence="1">N-glycosylated.</text>
</comment>
<comment type="miscellaneous">
    <text>The influenza A genome consist of 8 RNA segments. Genetic variation of hemagglutinin and/or neuraminidase genes results in the emergence of new influenza strains. The mechanism of variation can be the result of point mutations or the result of genetic reassortment between segments of two different strains.</text>
</comment>
<comment type="similarity">
    <text evidence="1">Belongs to the glycosyl hydrolase 34 family.</text>
</comment>
<proteinExistence type="inferred from homology"/>
<feature type="chain" id="PRO_0000372974" description="Neuraminidase">
    <location>
        <begin position="1"/>
        <end position="470"/>
    </location>
</feature>
<feature type="topological domain" description="Intravirion" evidence="1">
    <location>
        <begin position="1"/>
        <end position="6"/>
    </location>
</feature>
<feature type="transmembrane region" description="Helical" evidence="1">
    <location>
        <begin position="7"/>
        <end position="27"/>
    </location>
</feature>
<feature type="topological domain" description="Virion surface" evidence="1">
    <location>
        <begin position="28"/>
        <end position="470"/>
    </location>
</feature>
<feature type="region of interest" description="Involved in apical transport and lipid raft association" evidence="1">
    <location>
        <begin position="11"/>
        <end position="33"/>
    </location>
</feature>
<feature type="region of interest" description="Hypervariable stalk region" evidence="1">
    <location>
        <begin position="36"/>
        <end position="90"/>
    </location>
</feature>
<feature type="region of interest" description="Head of neuraminidase" evidence="1">
    <location>
        <begin position="91"/>
        <end position="470"/>
    </location>
</feature>
<feature type="active site" description="Proton donor/acceptor" evidence="1">
    <location>
        <position position="151"/>
    </location>
</feature>
<feature type="active site" description="Nucleophile" evidence="1">
    <location>
        <position position="402"/>
    </location>
</feature>
<feature type="binding site" evidence="1">
    <location>
        <position position="118"/>
    </location>
    <ligand>
        <name>substrate</name>
    </ligand>
</feature>
<feature type="binding site" evidence="1">
    <location>
        <position position="152"/>
    </location>
    <ligand>
        <name>substrate</name>
    </ligand>
</feature>
<feature type="binding site" evidence="1">
    <location>
        <begin position="277"/>
        <end position="278"/>
    </location>
    <ligand>
        <name>substrate</name>
    </ligand>
</feature>
<feature type="binding site" evidence="1">
    <location>
        <position position="293"/>
    </location>
    <ligand>
        <name>substrate</name>
    </ligand>
</feature>
<feature type="binding site" evidence="1">
    <location>
        <position position="294"/>
    </location>
    <ligand>
        <name>Ca(2+)</name>
        <dbReference type="ChEBI" id="CHEBI:29108"/>
    </ligand>
</feature>
<feature type="binding site" evidence="1">
    <location>
        <position position="298"/>
    </location>
    <ligand>
        <name>Ca(2+)</name>
        <dbReference type="ChEBI" id="CHEBI:29108"/>
    </ligand>
</feature>
<feature type="binding site" evidence="1">
    <location>
        <position position="324"/>
    </location>
    <ligand>
        <name>Ca(2+)</name>
        <dbReference type="ChEBI" id="CHEBI:29108"/>
    </ligand>
</feature>
<feature type="binding site" evidence="1">
    <location>
        <position position="368"/>
    </location>
    <ligand>
        <name>substrate</name>
    </ligand>
</feature>
<feature type="glycosylation site" description="N-linked (GlcNAc...) asparagine; by host" evidence="1">
    <location>
        <position position="44"/>
    </location>
</feature>
<feature type="glycosylation site" description="N-linked (GlcNAc...) asparagine; by host" evidence="1">
    <location>
        <position position="58"/>
    </location>
</feature>
<feature type="glycosylation site" description="N-linked (GlcNAc...) asparagine; by host" evidence="1">
    <location>
        <position position="63"/>
    </location>
</feature>
<feature type="glycosylation site" description="N-linked (GlcNAc...) asparagine; by host" evidence="1">
    <location>
        <position position="70"/>
    </location>
</feature>
<feature type="glycosylation site" description="N-linked (GlcNAc...) asparagine; by host" evidence="1">
    <location>
        <position position="88"/>
    </location>
</feature>
<feature type="glycosylation site" description="N-linked (GlcNAc...) asparagine; by host" evidence="1">
    <location>
        <position position="146"/>
    </location>
</feature>
<feature type="glycosylation site" description="N-linked (GlcNAc...) asparagine; by host" evidence="1">
    <location>
        <position position="235"/>
    </location>
</feature>
<feature type="glycosylation site" description="N-linked (GlcNAc...) asparagine; by host" evidence="1">
    <location>
        <position position="365"/>
    </location>
</feature>
<feature type="glycosylation site" description="N-linked (GlcNAc...) asparagine; by host" evidence="1">
    <location>
        <position position="455"/>
    </location>
</feature>
<feature type="disulfide bond" evidence="1">
    <location>
        <begin position="92"/>
        <end position="417"/>
    </location>
</feature>
<feature type="disulfide bond" evidence="1">
    <location>
        <begin position="124"/>
        <end position="129"/>
    </location>
</feature>
<feature type="disulfide bond" evidence="1">
    <location>
        <begin position="184"/>
        <end position="231"/>
    </location>
</feature>
<feature type="disulfide bond" evidence="1">
    <location>
        <begin position="233"/>
        <end position="238"/>
    </location>
</feature>
<feature type="disulfide bond" evidence="1">
    <location>
        <begin position="279"/>
        <end position="292"/>
    </location>
</feature>
<feature type="disulfide bond" evidence="1">
    <location>
        <begin position="281"/>
        <end position="290"/>
    </location>
</feature>
<feature type="disulfide bond" evidence="1">
    <location>
        <begin position="318"/>
        <end position="335"/>
    </location>
</feature>
<feature type="disulfide bond" evidence="1">
    <location>
        <begin position="421"/>
        <end position="447"/>
    </location>
</feature>
<sequence>MNPNQKIITIGSICMAIGIISLILQMGNIISIWVSHSIQTGSQNHTGICNQRIITYENSTWVNQTYVNINNTNVVAGKDTTSVTLAGNSSLCPIRGWAIYSKDNSIRIGSKGDVFVIREPFISCSHLECRTFFLTQGALLNDKHSNGTVKDRSPYRALMSCPIGEAPSPYNSRFESVAWSASACHDGMGWLTIGISGPDDGAVAVLKYNGIITETIKSWRKRILRTQESECVCVNGSCFTIMTDGPSNGPASYRIFKIEKGKITKSIELDAPNSHYEECSCYPDTGTVMCVCRDNWHGSNRPWVSFNQNLDYQIGYICSGVFGDNPRPKDGKGSCDPVTVDGADGVKGFSYRYGNGVWIGRTKSNSSRKGFEMIWDPNGWTDTDSNFLVKQDVVAMTDWSGYSGSFVQHPELTGLDCMRPCFWVELIRGRPREKTTIWTSGSSISFCGVNSDTANWSWPDGAELPFTIDK</sequence>
<evidence type="ECO:0000255" key="1">
    <source>
        <dbReference type="HAMAP-Rule" id="MF_04071"/>
    </source>
</evidence>
<organism>
    <name type="scientific">Influenza A virus (strain A/India/6263/1980 H1N1)</name>
    <dbReference type="NCBI Taxonomy" id="393562"/>
    <lineage>
        <taxon>Viruses</taxon>
        <taxon>Riboviria</taxon>
        <taxon>Orthornavirae</taxon>
        <taxon>Negarnaviricota</taxon>
        <taxon>Polyploviricotina</taxon>
        <taxon>Insthoviricetes</taxon>
        <taxon>Articulavirales</taxon>
        <taxon>Orthomyxoviridae</taxon>
        <taxon>Alphainfluenzavirus</taxon>
        <taxon>Alphainfluenzavirus influenzae</taxon>
        <taxon>Influenza A virus</taxon>
    </lineage>
</organism>
<dbReference type="EC" id="3.2.1.18" evidence="1"/>
<dbReference type="EMBL" id="CY020455">
    <property type="protein sequence ID" value="ABO38365.1"/>
    <property type="molecule type" value="Viral_cRNA"/>
</dbReference>
<dbReference type="SMR" id="A4GCK0"/>
<dbReference type="CAZy" id="GH34">
    <property type="family name" value="Glycoside Hydrolase Family 34"/>
</dbReference>
<dbReference type="GlyCosmos" id="A4GCK0">
    <property type="glycosylation" value="9 sites, No reported glycans"/>
</dbReference>
<dbReference type="PRO" id="PR:A4GCK0"/>
<dbReference type="Proteomes" id="UP000008580">
    <property type="component" value="Genome"/>
</dbReference>
<dbReference type="GO" id="GO:0020002">
    <property type="term" value="C:host cell plasma membrane"/>
    <property type="evidence" value="ECO:0007669"/>
    <property type="project" value="UniProtKB-SubCell"/>
</dbReference>
<dbReference type="GO" id="GO:0016020">
    <property type="term" value="C:membrane"/>
    <property type="evidence" value="ECO:0007669"/>
    <property type="project" value="UniProtKB-UniRule"/>
</dbReference>
<dbReference type="GO" id="GO:0055036">
    <property type="term" value="C:virion membrane"/>
    <property type="evidence" value="ECO:0007669"/>
    <property type="project" value="UniProtKB-SubCell"/>
</dbReference>
<dbReference type="GO" id="GO:0004308">
    <property type="term" value="F:exo-alpha-sialidase activity"/>
    <property type="evidence" value="ECO:0007669"/>
    <property type="project" value="UniProtKB-UniRule"/>
</dbReference>
<dbReference type="GO" id="GO:0046872">
    <property type="term" value="F:metal ion binding"/>
    <property type="evidence" value="ECO:0007669"/>
    <property type="project" value="UniProtKB-UniRule"/>
</dbReference>
<dbReference type="GO" id="GO:0005975">
    <property type="term" value="P:carbohydrate metabolic process"/>
    <property type="evidence" value="ECO:0007669"/>
    <property type="project" value="InterPro"/>
</dbReference>
<dbReference type="GO" id="GO:0046761">
    <property type="term" value="P:viral budding from plasma membrane"/>
    <property type="evidence" value="ECO:0007669"/>
    <property type="project" value="UniProtKB-UniRule"/>
</dbReference>
<dbReference type="CDD" id="cd15483">
    <property type="entry name" value="Influenza_NA"/>
    <property type="match status" value="1"/>
</dbReference>
<dbReference type="FunFam" id="2.120.10.10:FF:000001">
    <property type="entry name" value="Neuraminidase"/>
    <property type="match status" value="1"/>
</dbReference>
<dbReference type="Gene3D" id="2.120.10.10">
    <property type="match status" value="1"/>
</dbReference>
<dbReference type="HAMAP" id="MF_04071">
    <property type="entry name" value="INFV_NRAM"/>
    <property type="match status" value="1"/>
</dbReference>
<dbReference type="InterPro" id="IPR001860">
    <property type="entry name" value="Glyco_hydro_34"/>
</dbReference>
<dbReference type="InterPro" id="IPR033654">
    <property type="entry name" value="Sialidase_Influenza_A/B"/>
</dbReference>
<dbReference type="InterPro" id="IPR036278">
    <property type="entry name" value="Sialidase_sf"/>
</dbReference>
<dbReference type="Pfam" id="PF00064">
    <property type="entry name" value="Neur"/>
    <property type="match status" value="1"/>
</dbReference>
<dbReference type="SUPFAM" id="SSF50939">
    <property type="entry name" value="Sialidases"/>
    <property type="match status" value="1"/>
</dbReference>
<accession>A4GCK0</accession>
<keyword id="KW-0106">Calcium</keyword>
<keyword id="KW-1015">Disulfide bond</keyword>
<keyword id="KW-0325">Glycoprotein</keyword>
<keyword id="KW-0326">Glycosidase</keyword>
<keyword id="KW-1032">Host cell membrane</keyword>
<keyword id="KW-1043">Host membrane</keyword>
<keyword id="KW-0378">Hydrolase</keyword>
<keyword id="KW-0472">Membrane</keyword>
<keyword id="KW-0479">Metal-binding</keyword>
<keyword id="KW-0735">Signal-anchor</keyword>
<keyword id="KW-0812">Transmembrane</keyword>
<keyword id="KW-1133">Transmembrane helix</keyword>
<keyword id="KW-0946">Virion</keyword>